<sequence length="106" mass="11261">MIITTTPTIDGHQITEYKGLVFGEVVSGANFIRDFFASITDVIGGRSGAYESKLNSARQEALAELEKEAKRVGANALVGVSMEYQSMGGDKGMFIVVATGTAVVIR</sequence>
<proteinExistence type="inferred from homology"/>
<comment type="similarity">
    <text evidence="1">Belongs to the UPF0145 family.</text>
</comment>
<organism>
    <name type="scientific">Actinobacillus pleuropneumoniae serotype 3 (strain JL03)</name>
    <dbReference type="NCBI Taxonomy" id="434271"/>
    <lineage>
        <taxon>Bacteria</taxon>
        <taxon>Pseudomonadati</taxon>
        <taxon>Pseudomonadota</taxon>
        <taxon>Gammaproteobacteria</taxon>
        <taxon>Pasteurellales</taxon>
        <taxon>Pasteurellaceae</taxon>
        <taxon>Actinobacillus</taxon>
    </lineage>
</organism>
<dbReference type="EMBL" id="CP000687">
    <property type="protein sequence ID" value="ABY69073.1"/>
    <property type="molecule type" value="Genomic_DNA"/>
</dbReference>
<dbReference type="RefSeq" id="WP_005596594.1">
    <property type="nucleotide sequence ID" value="NC_010278.1"/>
</dbReference>
<dbReference type="SMR" id="B0BTW8"/>
<dbReference type="KEGG" id="apj:APJL_0492"/>
<dbReference type="HOGENOM" id="CLU_117144_3_2_6"/>
<dbReference type="Proteomes" id="UP000008547">
    <property type="component" value="Chromosome"/>
</dbReference>
<dbReference type="Gene3D" id="3.30.110.70">
    <property type="entry name" value="Hypothetical protein apc22750. Chain B"/>
    <property type="match status" value="1"/>
</dbReference>
<dbReference type="HAMAP" id="MF_00338">
    <property type="entry name" value="UPF0145"/>
    <property type="match status" value="1"/>
</dbReference>
<dbReference type="InterPro" id="IPR035439">
    <property type="entry name" value="UPF0145_dom_sf"/>
</dbReference>
<dbReference type="InterPro" id="IPR002765">
    <property type="entry name" value="UPF0145_YbjQ-like"/>
</dbReference>
<dbReference type="PANTHER" id="PTHR34068">
    <property type="entry name" value="UPF0145 PROTEIN YBJQ"/>
    <property type="match status" value="1"/>
</dbReference>
<dbReference type="PANTHER" id="PTHR34068:SF1">
    <property type="entry name" value="UPF0145 PROTEIN YBJQ"/>
    <property type="match status" value="1"/>
</dbReference>
<dbReference type="Pfam" id="PF01906">
    <property type="entry name" value="YbjQ_1"/>
    <property type="match status" value="1"/>
</dbReference>
<dbReference type="SUPFAM" id="SSF117782">
    <property type="entry name" value="YbjQ-like"/>
    <property type="match status" value="1"/>
</dbReference>
<evidence type="ECO:0000255" key="1">
    <source>
        <dbReference type="HAMAP-Rule" id="MF_00338"/>
    </source>
</evidence>
<reference key="1">
    <citation type="journal article" date="2008" name="PLoS ONE">
        <title>Genome biology of Actinobacillus pleuropneumoniae JL03, an isolate of serotype 3 prevalent in China.</title>
        <authorList>
            <person name="Xu Z."/>
            <person name="Zhou Y."/>
            <person name="Li L."/>
            <person name="Zhou R."/>
            <person name="Xiao S."/>
            <person name="Wan Y."/>
            <person name="Zhang S."/>
            <person name="Wang K."/>
            <person name="Li W."/>
            <person name="Li L."/>
            <person name="Jin H."/>
            <person name="Kang M."/>
            <person name="Dalai B."/>
            <person name="Li T."/>
            <person name="Liu L."/>
            <person name="Cheng Y."/>
            <person name="Zhang L."/>
            <person name="Xu T."/>
            <person name="Zheng H."/>
            <person name="Pu S."/>
            <person name="Wang B."/>
            <person name="Gu W."/>
            <person name="Zhang X.L."/>
            <person name="Zhu G.-F."/>
            <person name="Wang S."/>
            <person name="Zhao G.-P."/>
            <person name="Chen H."/>
        </authorList>
    </citation>
    <scope>NUCLEOTIDE SEQUENCE [LARGE SCALE GENOMIC DNA]</scope>
    <source>
        <strain>JL03</strain>
    </source>
</reference>
<accession>B0BTW8</accession>
<name>Y492_ACTPJ</name>
<feature type="chain" id="PRO_1000119977" description="UPF0145 protein APJL_0492">
    <location>
        <begin position="1"/>
        <end position="106"/>
    </location>
</feature>
<protein>
    <recommendedName>
        <fullName evidence="1">UPF0145 protein APJL_0492</fullName>
    </recommendedName>
</protein>
<gene>
    <name type="ordered locus">APJL_0492</name>
</gene>